<reference evidence="8 9" key="1">
    <citation type="journal article" date="1999" name="Biochem. J.">
        <title>Expression and targeting to the plasma membrane of xClC-K, a chloride channel specifically expressed in distinct tubule segments of Xenopus laevis kidney.</title>
        <authorList>
            <person name="Maulet Y."/>
            <person name="Lambert R.C."/>
            <person name="Mykita S."/>
            <person name="Mouton J."/>
            <person name="Partisani M."/>
            <person name="Bailly Y."/>
            <person name="Bombarde G."/>
            <person name="Feltz A."/>
        </authorList>
    </citation>
    <scope>NUCLEOTIDE SEQUENCE [MRNA]</scope>
    <scope>SUBCELLULAR LOCATION</scope>
    <scope>TISSUE SPECIFICITY</scope>
    <scope>GLYCOSYLATION</scope>
    <source>
        <tissue evidence="7">Oocyte</tissue>
    </source>
</reference>
<organism>
    <name type="scientific">Xenopus laevis</name>
    <name type="common">African clawed frog</name>
    <dbReference type="NCBI Taxonomy" id="8355"/>
    <lineage>
        <taxon>Eukaryota</taxon>
        <taxon>Metazoa</taxon>
        <taxon>Chordata</taxon>
        <taxon>Craniata</taxon>
        <taxon>Vertebrata</taxon>
        <taxon>Euteleostomi</taxon>
        <taxon>Amphibia</taxon>
        <taxon>Batrachia</taxon>
        <taxon>Anura</taxon>
        <taxon>Pipoidea</taxon>
        <taxon>Pipidae</taxon>
        <taxon>Xenopodinae</taxon>
        <taxon>Xenopus</taxon>
        <taxon>Xenopus</taxon>
    </lineage>
</organism>
<name>CLCKB_XENLA</name>
<sequence>MSRVLVIEQREGEEKTLIQKHIFRPFPNTRRVVIDHLQRLKNFLFRIGDDWYFLFALGVIMALISFTMDFTVSKMLNAHRWLQQELGGNVLLRYLSWIVYPIALVAFSTGFAQSITPHSGGSGIPELKTILSGVILEEYLTIKNFGAKVVGLTCTLSAGSTMFLGKVGPFVHLSSMIAAYLGRMRTSVAGDYENKSKEHEMLVAAAAVGVSTVFGAPISGVLFSVEVMSSHFAIRNYWRGFFAATCGAFVFRLLAVFNSEQETITAVFKTSFKISFPFDLPEMFFFAILGVVCGLIGCAYLFCQRWLLGYVRRNSLTSKLLASDKPMYSALVALLISSITFPESLGQFLASRLTMKELLTSLFDNRTWWISLSQNSSLDRSPLVDPNNLWLEWANPQFTIFGTLAFFIIMKFWMFILATTLPMPAGYFMPVFVFGAAIGRLVGETVALLYPEGIAADGIVNPIIPGGYAWQGAPAYSGAVTHSVSTALLAFEATGQIAHILPVILCVLIANAFTQKLQPSFYDGTIIVKKLPYLPRIRSRDIDSYKVNTEEFMNPDIRVLPREAGFEDVLKVITASDDSEYPVVDNTESQVLVGTVKRPQLIHFLETHESHERAGPTEKENLSEGNLGEACSIEPVTFQLSTWTSLHQAHHLFELLHLQKAFVTKYGRIVGQVTRKEMKKAIEDLANPK</sequence>
<gene>
    <name type="primary">clcnkb</name>
</gene>
<evidence type="ECO:0000250" key="1"/>
<evidence type="ECO:0000250" key="2">
    <source>
        <dbReference type="UniProtKB" id="P35523"/>
    </source>
</evidence>
<evidence type="ECO:0000250" key="3">
    <source>
        <dbReference type="UniProtKB" id="P37019"/>
    </source>
</evidence>
<evidence type="ECO:0000250" key="4">
    <source>
        <dbReference type="UniProtKB" id="P51801"/>
    </source>
</evidence>
<evidence type="ECO:0000255" key="5"/>
<evidence type="ECO:0000255" key="6">
    <source>
        <dbReference type="PROSITE-ProRule" id="PRU00703"/>
    </source>
</evidence>
<evidence type="ECO:0000269" key="7">
    <source>
    </source>
</evidence>
<evidence type="ECO:0000305" key="8"/>
<evidence type="ECO:0000312" key="9">
    <source>
        <dbReference type="EMBL" id="CAB51058.1"/>
    </source>
</evidence>
<dbReference type="EMBL" id="AJ011385">
    <property type="protein sequence ID" value="CAB51058.1"/>
    <property type="molecule type" value="mRNA"/>
</dbReference>
<dbReference type="SMR" id="Q9W701"/>
<dbReference type="GlyCosmos" id="Q9W701">
    <property type="glycosylation" value="1 site, No reported glycans"/>
</dbReference>
<dbReference type="DNASU" id="378616"/>
<dbReference type="GeneID" id="378616"/>
<dbReference type="KEGG" id="xla:378616"/>
<dbReference type="AGR" id="Xenbase:XB-GENE-6252397"/>
<dbReference type="CTD" id="378616"/>
<dbReference type="Xenbase" id="XB-GENE-6252397">
    <property type="gene designation" value="clcnkb.L"/>
</dbReference>
<dbReference type="OrthoDB" id="4564at2759"/>
<dbReference type="Proteomes" id="UP000186698">
    <property type="component" value="Chromosome 7L"/>
</dbReference>
<dbReference type="Bgee" id="378616">
    <property type="expression patterns" value="Expressed in kidney and 9 other cell types or tissues"/>
</dbReference>
<dbReference type="GO" id="GO:0034707">
    <property type="term" value="C:chloride channel complex"/>
    <property type="evidence" value="ECO:0007669"/>
    <property type="project" value="UniProtKB-KW"/>
</dbReference>
<dbReference type="GO" id="GO:0005886">
    <property type="term" value="C:plasma membrane"/>
    <property type="evidence" value="ECO:0000314"/>
    <property type="project" value="UniProtKB"/>
</dbReference>
<dbReference type="GO" id="GO:0005254">
    <property type="term" value="F:chloride channel activity"/>
    <property type="evidence" value="ECO:0000250"/>
    <property type="project" value="UniProtKB"/>
</dbReference>
<dbReference type="GO" id="GO:0046872">
    <property type="term" value="F:metal ion binding"/>
    <property type="evidence" value="ECO:0007669"/>
    <property type="project" value="UniProtKB-KW"/>
</dbReference>
<dbReference type="GO" id="GO:0005247">
    <property type="term" value="F:voltage-gated chloride channel activity"/>
    <property type="evidence" value="ECO:0000318"/>
    <property type="project" value="GO_Central"/>
</dbReference>
<dbReference type="GO" id="GO:0006821">
    <property type="term" value="P:chloride transport"/>
    <property type="evidence" value="ECO:0000250"/>
    <property type="project" value="UniProtKB"/>
</dbReference>
<dbReference type="CDD" id="cd04591">
    <property type="entry name" value="CBS_pair_voltage-gated_CLC_euk_bac"/>
    <property type="match status" value="1"/>
</dbReference>
<dbReference type="CDD" id="cd03683">
    <property type="entry name" value="ClC_1_like"/>
    <property type="match status" value="1"/>
</dbReference>
<dbReference type="FunFam" id="1.10.3080.10:FF:000012">
    <property type="entry name" value="Chloride channel K"/>
    <property type="match status" value="1"/>
</dbReference>
<dbReference type="FunFam" id="3.10.580.10:FF:000028">
    <property type="entry name" value="Chloride channel protein"/>
    <property type="match status" value="1"/>
</dbReference>
<dbReference type="Gene3D" id="3.10.580.10">
    <property type="entry name" value="CBS-domain"/>
    <property type="match status" value="1"/>
</dbReference>
<dbReference type="Gene3D" id="1.10.3080.10">
    <property type="entry name" value="Clc chloride channel"/>
    <property type="match status" value="1"/>
</dbReference>
<dbReference type="InterPro" id="IPR000644">
    <property type="entry name" value="CBS_dom"/>
</dbReference>
<dbReference type="InterPro" id="IPR046342">
    <property type="entry name" value="CBS_dom_sf"/>
</dbReference>
<dbReference type="InterPro" id="IPR014743">
    <property type="entry name" value="Cl-channel_core"/>
</dbReference>
<dbReference type="InterPro" id="IPR002250">
    <property type="entry name" value="Cl_channel-K"/>
</dbReference>
<dbReference type="InterPro" id="IPR050970">
    <property type="entry name" value="Cl_channel_volt-gated"/>
</dbReference>
<dbReference type="InterPro" id="IPR001807">
    <property type="entry name" value="ClC"/>
</dbReference>
<dbReference type="PANTHER" id="PTHR45720">
    <property type="entry name" value="CHLORIDE CHANNEL PROTEIN 2"/>
    <property type="match status" value="1"/>
</dbReference>
<dbReference type="PANTHER" id="PTHR45720:SF3">
    <property type="entry name" value="CHLORIDE CHANNEL PROTEIN CLC-KB"/>
    <property type="match status" value="1"/>
</dbReference>
<dbReference type="Pfam" id="PF00654">
    <property type="entry name" value="Voltage_CLC"/>
    <property type="match status" value="1"/>
</dbReference>
<dbReference type="PRINTS" id="PR00762">
    <property type="entry name" value="CLCHANNEL"/>
</dbReference>
<dbReference type="PRINTS" id="PR01119">
    <property type="entry name" value="CLCHANNELKDY"/>
</dbReference>
<dbReference type="SMART" id="SM00116">
    <property type="entry name" value="CBS"/>
    <property type="match status" value="1"/>
</dbReference>
<dbReference type="SUPFAM" id="SSF54631">
    <property type="entry name" value="CBS-domain pair"/>
    <property type="match status" value="1"/>
</dbReference>
<dbReference type="SUPFAM" id="SSF81340">
    <property type="entry name" value="Clc chloride channel"/>
    <property type="match status" value="1"/>
</dbReference>
<dbReference type="PROSITE" id="PS51371">
    <property type="entry name" value="CBS"/>
    <property type="match status" value="2"/>
</dbReference>
<feature type="chain" id="PRO_0000391463" description="Chloride channel protein ClC-Kb">
    <location>
        <begin position="1"/>
        <end position="689"/>
    </location>
</feature>
<feature type="topological domain" description="Cytoplasmic" evidence="2">
    <location>
        <begin position="1"/>
        <end position="51"/>
    </location>
</feature>
<feature type="transmembrane region" description="Helical" evidence="2">
    <location>
        <begin position="52"/>
        <end position="83"/>
    </location>
</feature>
<feature type="transmembrane region" description="Helical" evidence="2">
    <location>
        <begin position="92"/>
        <end position="112"/>
    </location>
</feature>
<feature type="intramembrane region" description="Helical" evidence="2">
    <location>
        <begin position="117"/>
        <end position="128"/>
    </location>
</feature>
<feature type="transmembrane region" description="Helical" evidence="2">
    <location>
        <begin position="142"/>
        <end position="161"/>
    </location>
</feature>
<feature type="transmembrane region" description="Helical" evidence="2">
    <location>
        <begin position="162"/>
        <end position="181"/>
    </location>
</feature>
<feature type="intramembrane region" description="Helical" evidence="2">
    <location>
        <begin position="204"/>
        <end position="225"/>
    </location>
</feature>
<feature type="transmembrane region" description="Helical" evidence="2">
    <location>
        <begin position="237"/>
        <end position="256"/>
    </location>
</feature>
<feature type="transmembrane region" description="Helical" evidence="2">
    <location>
        <begin position="283"/>
        <end position="311"/>
    </location>
</feature>
<feature type="transmembrane region" description="Helical" evidence="2">
    <location>
        <begin position="326"/>
        <end position="343"/>
    </location>
</feature>
<feature type="intramembrane region" description="Helical" evidence="2">
    <location>
        <begin position="350"/>
        <end position="361"/>
    </location>
</feature>
<feature type="transmembrane region" description="Helical" evidence="2">
    <location>
        <begin position="402"/>
        <end position="422"/>
    </location>
</feature>
<feature type="transmembrane region" description="Helical" evidence="2">
    <location>
        <begin position="423"/>
        <end position="442"/>
    </location>
</feature>
<feature type="intramembrane region" description="Helical" evidence="2">
    <location>
        <begin position="466"/>
        <end position="498"/>
    </location>
</feature>
<feature type="transmembrane region" description="Helical" evidence="2">
    <location>
        <begin position="502"/>
        <end position="522"/>
    </location>
</feature>
<feature type="topological domain" description="Cytoplasmic" evidence="2">
    <location>
        <begin position="523"/>
        <end position="689"/>
    </location>
</feature>
<feature type="domain" description="CBS 1" evidence="6">
    <location>
        <begin position="553"/>
        <end position="613"/>
    </location>
</feature>
<feature type="domain" description="CBS 2" evidence="6">
    <location>
        <begin position="630"/>
        <end position="689"/>
    </location>
</feature>
<feature type="binding site" evidence="3">
    <location>
        <position position="122"/>
    </location>
    <ligand>
        <name>chloride</name>
        <dbReference type="ChEBI" id="CHEBI:17996"/>
    </ligand>
</feature>
<feature type="binding site" evidence="1">
    <location>
        <position position="260"/>
    </location>
    <ligand>
        <name>Ca(2+)</name>
        <dbReference type="ChEBI" id="CHEBI:29108"/>
    </ligand>
</feature>
<feature type="binding site" evidence="1">
    <location>
        <position position="262"/>
    </location>
    <ligand>
        <name>Ca(2+)</name>
        <dbReference type="ChEBI" id="CHEBI:29108"/>
    </ligand>
</feature>
<feature type="binding site" evidence="1">
    <location>
        <position position="279"/>
    </location>
    <ligand>
        <name>Ca(2+)</name>
        <dbReference type="ChEBI" id="CHEBI:29108"/>
    </ligand>
</feature>
<feature type="binding site" evidence="1">
    <location>
        <position position="282"/>
    </location>
    <ligand>
        <name>Ca(2+)</name>
        <dbReference type="ChEBI" id="CHEBI:29108"/>
    </ligand>
</feature>
<feature type="binding site" evidence="3">
    <location>
        <position position="428"/>
    </location>
    <ligand>
        <name>chloride</name>
        <dbReference type="ChEBI" id="CHEBI:17996"/>
    </ligand>
</feature>
<feature type="glycosylation site" description="N-linked (GlcNAc...) asparagine" evidence="5">
    <location>
        <position position="194"/>
    </location>
</feature>
<proteinExistence type="evidence at protein level"/>
<comment type="function">
    <text>Voltage-gated chloride channel. Chloride channels have several functions including the regulation of cell volume, the stabilization of membrane potential, signal transduction and transepithelial transport.</text>
</comment>
<comment type="subcellular location">
    <subcellularLocation>
        <location evidence="7">Cell membrane</location>
        <topology evidence="5 7">Multi-pass membrane protein</topology>
    </subcellularLocation>
</comment>
<comment type="tissue specificity">
    <text evidence="7">Expressed in two distinct regions of the kidney; the proximal convoluted tubule and the diluting segment.</text>
</comment>
<comment type="PTM">
    <text evidence="7">N-glycosylated on a single asparagine, probably Asn-365 or Asn-375.</text>
</comment>
<comment type="similarity">
    <text evidence="5">Belongs to the chloride channel (TC 2.A.49) family.</text>
</comment>
<protein>
    <recommendedName>
        <fullName evidence="4">Chloride channel protein ClC-Kb</fullName>
        <shortName evidence="4">Chloride channel Kb</shortName>
    </recommendedName>
    <alternativeName>
        <fullName>x6clck</fullName>
    </alternativeName>
    <alternativeName>
        <fullName>xCIC-K</fullName>
    </alternativeName>
</protein>
<keyword id="KW-0106">Calcium</keyword>
<keyword id="KW-0129">CBS domain</keyword>
<keyword id="KW-1003">Cell membrane</keyword>
<keyword id="KW-0868">Chloride</keyword>
<keyword id="KW-0869">Chloride channel</keyword>
<keyword id="KW-0325">Glycoprotein</keyword>
<keyword id="KW-0407">Ion channel</keyword>
<keyword id="KW-0406">Ion transport</keyword>
<keyword id="KW-0472">Membrane</keyword>
<keyword id="KW-0479">Metal-binding</keyword>
<keyword id="KW-1185">Reference proteome</keyword>
<keyword id="KW-0677">Repeat</keyword>
<keyword id="KW-0812">Transmembrane</keyword>
<keyword id="KW-1133">Transmembrane helix</keyword>
<keyword id="KW-0813">Transport</keyword>
<keyword id="KW-0851">Voltage-gated channel</keyword>
<accession>Q9W701</accession>